<protein>
    <recommendedName>
        <fullName>Putative lipase atg15</fullName>
        <ecNumber>3.1.1.3</ecNumber>
    </recommendedName>
    <alternativeName>
        <fullName>Autophagy-related protein 15</fullName>
    </alternativeName>
</protein>
<reference key="1">
    <citation type="journal article" date="2005" name="Nature">
        <title>Genomic sequence of the pathogenic and allergenic filamentous fungus Aspergillus fumigatus.</title>
        <authorList>
            <person name="Nierman W.C."/>
            <person name="Pain A."/>
            <person name="Anderson M.J."/>
            <person name="Wortman J.R."/>
            <person name="Kim H.S."/>
            <person name="Arroyo J."/>
            <person name="Berriman M."/>
            <person name="Abe K."/>
            <person name="Archer D.B."/>
            <person name="Bermejo C."/>
            <person name="Bennett J.W."/>
            <person name="Bowyer P."/>
            <person name="Chen D."/>
            <person name="Collins M."/>
            <person name="Coulsen R."/>
            <person name="Davies R."/>
            <person name="Dyer P.S."/>
            <person name="Farman M.L."/>
            <person name="Fedorova N."/>
            <person name="Fedorova N.D."/>
            <person name="Feldblyum T.V."/>
            <person name="Fischer R."/>
            <person name="Fosker N."/>
            <person name="Fraser A."/>
            <person name="Garcia J.L."/>
            <person name="Garcia M.J."/>
            <person name="Goble A."/>
            <person name="Goldman G.H."/>
            <person name="Gomi K."/>
            <person name="Griffith-Jones S."/>
            <person name="Gwilliam R."/>
            <person name="Haas B.J."/>
            <person name="Haas H."/>
            <person name="Harris D.E."/>
            <person name="Horiuchi H."/>
            <person name="Huang J."/>
            <person name="Humphray S."/>
            <person name="Jimenez J."/>
            <person name="Keller N."/>
            <person name="Khouri H."/>
            <person name="Kitamoto K."/>
            <person name="Kobayashi T."/>
            <person name="Konzack S."/>
            <person name="Kulkarni R."/>
            <person name="Kumagai T."/>
            <person name="Lafton A."/>
            <person name="Latge J.-P."/>
            <person name="Li W."/>
            <person name="Lord A."/>
            <person name="Lu C."/>
            <person name="Majoros W.H."/>
            <person name="May G.S."/>
            <person name="Miller B.L."/>
            <person name="Mohamoud Y."/>
            <person name="Molina M."/>
            <person name="Monod M."/>
            <person name="Mouyna I."/>
            <person name="Mulligan S."/>
            <person name="Murphy L.D."/>
            <person name="O'Neil S."/>
            <person name="Paulsen I."/>
            <person name="Penalva M.A."/>
            <person name="Pertea M."/>
            <person name="Price C."/>
            <person name="Pritchard B.L."/>
            <person name="Quail M.A."/>
            <person name="Rabbinowitsch E."/>
            <person name="Rawlins N."/>
            <person name="Rajandream M.A."/>
            <person name="Reichard U."/>
            <person name="Renauld H."/>
            <person name="Robson G.D."/>
            <person name="Rodriguez de Cordoba S."/>
            <person name="Rodriguez-Pena J.M."/>
            <person name="Ronning C.M."/>
            <person name="Rutter S."/>
            <person name="Salzberg S.L."/>
            <person name="Sanchez M."/>
            <person name="Sanchez-Ferrero J.C."/>
            <person name="Saunders D."/>
            <person name="Seeger K."/>
            <person name="Squares R."/>
            <person name="Squares S."/>
            <person name="Takeuchi M."/>
            <person name="Tekaia F."/>
            <person name="Turner G."/>
            <person name="Vazquez de Aldana C.R."/>
            <person name="Weidman J."/>
            <person name="White O."/>
            <person name="Woodward J.R."/>
            <person name="Yu J.-H."/>
            <person name="Fraser C.M."/>
            <person name="Galagan J.E."/>
            <person name="Asai K."/>
            <person name="Machida M."/>
            <person name="Hall N."/>
            <person name="Barrell B.G."/>
            <person name="Denning D.W."/>
        </authorList>
    </citation>
    <scope>NUCLEOTIDE SEQUENCE [LARGE SCALE GENOMIC DNA]</scope>
    <source>
        <strain>ATCC MYA-4609 / CBS 101355 / FGSC A1100 / Af293</strain>
    </source>
</reference>
<gene>
    <name type="primary">atg15</name>
    <name type="ORF">AFUA_2G10900</name>
</gene>
<feature type="chain" id="PRO_0000090364" description="Putative lipase atg15">
    <location>
        <begin position="1"/>
        <end position="650"/>
    </location>
</feature>
<feature type="topological domain" description="Cytoplasmic" evidence="3">
    <location>
        <begin position="1"/>
        <end position="11"/>
    </location>
</feature>
<feature type="transmembrane region" description="Helical; Signal-anchor for type II membrane protein" evidence="3">
    <location>
        <begin position="12"/>
        <end position="32"/>
    </location>
</feature>
<feature type="topological domain" description="Lumenal" evidence="3">
    <location>
        <begin position="33"/>
        <end position="650"/>
    </location>
</feature>
<feature type="active site" description="Charge relay system" evidence="4">
    <location>
        <position position="320"/>
    </location>
</feature>
<feature type="glycosylation site" description="N-linked (GlcNAc...) asparagine" evidence="3">
    <location>
        <position position="165"/>
    </location>
</feature>
<feature type="glycosylation site" description="N-linked (GlcNAc...) asparagine" evidence="3">
    <location>
        <position position="200"/>
    </location>
</feature>
<feature type="glycosylation site" description="N-linked (GlcNAc...) asparagine" evidence="3">
    <location>
        <position position="222"/>
    </location>
</feature>
<feature type="glycosylation site" description="N-linked (GlcNAc...) asparagine" evidence="3">
    <location>
        <position position="280"/>
    </location>
</feature>
<feature type="glycosylation site" description="N-linked (GlcNAc...) asparagine" evidence="3">
    <location>
        <position position="304"/>
    </location>
</feature>
<feature type="glycosylation site" description="N-linked (GlcNAc...) asparagine" evidence="3">
    <location>
        <position position="466"/>
    </location>
</feature>
<comment type="function">
    <text evidence="1">Lipase which is essential for lysis of subvacuolar cytoplasm to vacuole targeted bodies and intravacuolar autophagic bodies. Involved in the lysis of intravacuolar multivesicular body (MVB) vesicles. The intravacuolar membrane disintegration by atg15 is critical to life span extension (By similarity).</text>
</comment>
<comment type="catalytic activity">
    <reaction>
        <text>a triacylglycerol + H2O = a diacylglycerol + a fatty acid + H(+)</text>
        <dbReference type="Rhea" id="RHEA:12044"/>
        <dbReference type="ChEBI" id="CHEBI:15377"/>
        <dbReference type="ChEBI" id="CHEBI:15378"/>
        <dbReference type="ChEBI" id="CHEBI:17855"/>
        <dbReference type="ChEBI" id="CHEBI:18035"/>
        <dbReference type="ChEBI" id="CHEBI:28868"/>
        <dbReference type="EC" id="3.1.1.3"/>
    </reaction>
</comment>
<comment type="subunit">
    <text evidence="1">Binds to both phosphatidylinositol (PI) and phosphatidylinositol 3,5-bisphosphate (PIP2).</text>
</comment>
<comment type="subcellular location">
    <subcellularLocation>
        <location evidence="2">Endosome</location>
        <location evidence="2">Multivesicular body membrane</location>
        <topology evidence="2">Single-pass type II membrane protein</topology>
    </subcellularLocation>
    <subcellularLocation>
        <location evidence="2">Prevacuolar compartment membrane</location>
        <topology evidence="2">Single-pass type II membrane protein</topology>
    </subcellularLocation>
    <text evidence="2">From ER, targeted to vacuolar lumen at the MVB vesicles via the Golgi and the prevacuolar compartment (PVC).</text>
</comment>
<comment type="similarity">
    <text evidence="5">Belongs to the AB hydrolase superfamily. Lipase family.</text>
</comment>
<dbReference type="EC" id="3.1.1.3"/>
<dbReference type="EMBL" id="AAHF01000001">
    <property type="protein sequence ID" value="EAL93385.1"/>
    <property type="molecule type" value="Genomic_DNA"/>
</dbReference>
<dbReference type="RefSeq" id="XP_755423.1">
    <property type="nucleotide sequence ID" value="XM_750330.1"/>
</dbReference>
<dbReference type="FunCoup" id="Q4X180">
    <property type="interactions" value="63"/>
</dbReference>
<dbReference type="STRING" id="330879.Q4X180"/>
<dbReference type="ESTHER" id="aspfu-atg15">
    <property type="family name" value="ATG15-related-lipase"/>
</dbReference>
<dbReference type="GlyCosmos" id="Q4X180">
    <property type="glycosylation" value="6 sites, No reported glycans"/>
</dbReference>
<dbReference type="EnsemblFungi" id="EAL93385">
    <property type="protein sequence ID" value="EAL93385"/>
    <property type="gene ID" value="AFUA_2G10900"/>
</dbReference>
<dbReference type="GeneID" id="3513512"/>
<dbReference type="KEGG" id="afm:AFUA_2G10900"/>
<dbReference type="VEuPathDB" id="FungiDB:Afu2g10900"/>
<dbReference type="eggNOG" id="KOG4540">
    <property type="taxonomic scope" value="Eukaryota"/>
</dbReference>
<dbReference type="HOGENOM" id="CLU_028295_0_1_1"/>
<dbReference type="InParanoid" id="Q4X180"/>
<dbReference type="OMA" id="TYHFGHT"/>
<dbReference type="OrthoDB" id="58570at2759"/>
<dbReference type="Proteomes" id="UP000002530">
    <property type="component" value="Chromosome 2"/>
</dbReference>
<dbReference type="GO" id="GO:0016020">
    <property type="term" value="C:membrane"/>
    <property type="evidence" value="ECO:0000318"/>
    <property type="project" value="GO_Central"/>
</dbReference>
<dbReference type="GO" id="GO:0032585">
    <property type="term" value="C:multivesicular body membrane"/>
    <property type="evidence" value="ECO:0007669"/>
    <property type="project" value="UniProtKB-SubCell"/>
</dbReference>
<dbReference type="GO" id="GO:0005775">
    <property type="term" value="C:vacuolar lumen"/>
    <property type="evidence" value="ECO:0000318"/>
    <property type="project" value="GO_Central"/>
</dbReference>
<dbReference type="GO" id="GO:0004620">
    <property type="term" value="F:phospholipase activity"/>
    <property type="evidence" value="ECO:0000318"/>
    <property type="project" value="GO_Central"/>
</dbReference>
<dbReference type="GO" id="GO:0004806">
    <property type="term" value="F:triacylglycerol lipase activity"/>
    <property type="evidence" value="ECO:0007669"/>
    <property type="project" value="UniProtKB-EC"/>
</dbReference>
<dbReference type="GO" id="GO:0034496">
    <property type="term" value="P:multivesicular body membrane disassembly"/>
    <property type="evidence" value="ECO:0000318"/>
    <property type="project" value="GO_Central"/>
</dbReference>
<dbReference type="GO" id="GO:0046461">
    <property type="term" value="P:neutral lipid catabolic process"/>
    <property type="evidence" value="ECO:0000318"/>
    <property type="project" value="GO_Central"/>
</dbReference>
<dbReference type="GO" id="GO:0006660">
    <property type="term" value="P:phosphatidylserine catabolic process"/>
    <property type="evidence" value="ECO:0000318"/>
    <property type="project" value="GO_Central"/>
</dbReference>
<dbReference type="GO" id="GO:0034727">
    <property type="term" value="P:piecemeal microautophagy of the nucleus"/>
    <property type="evidence" value="ECO:0000318"/>
    <property type="project" value="GO_Central"/>
</dbReference>
<dbReference type="CDD" id="cd00519">
    <property type="entry name" value="Lipase_3"/>
    <property type="match status" value="1"/>
</dbReference>
<dbReference type="FunFam" id="3.40.50.1820:FF:000129">
    <property type="entry name" value="Autophagy related lipase Atg15, putative"/>
    <property type="match status" value="1"/>
</dbReference>
<dbReference type="Gene3D" id="3.40.50.1820">
    <property type="entry name" value="alpha/beta hydrolase"/>
    <property type="match status" value="1"/>
</dbReference>
<dbReference type="InterPro" id="IPR029058">
    <property type="entry name" value="AB_hydrolase_fold"/>
</dbReference>
<dbReference type="InterPro" id="IPR050805">
    <property type="entry name" value="ATG15_Lipase"/>
</dbReference>
<dbReference type="InterPro" id="IPR002921">
    <property type="entry name" value="Fungal_lipase-type"/>
</dbReference>
<dbReference type="PANTHER" id="PTHR47175">
    <property type="entry name" value="LIPASE ATG15-RELATED"/>
    <property type="match status" value="1"/>
</dbReference>
<dbReference type="PANTHER" id="PTHR47175:SF2">
    <property type="entry name" value="LIPASE ATG15-RELATED"/>
    <property type="match status" value="1"/>
</dbReference>
<dbReference type="Pfam" id="PF01764">
    <property type="entry name" value="Lipase_3"/>
    <property type="match status" value="1"/>
</dbReference>
<dbReference type="SUPFAM" id="SSF53474">
    <property type="entry name" value="alpha/beta-Hydrolases"/>
    <property type="match status" value="1"/>
</dbReference>
<dbReference type="PROSITE" id="PS00120">
    <property type="entry name" value="LIPASE_SER"/>
    <property type="match status" value="1"/>
</dbReference>
<sequence>MKSSRKRTKRRVLQDMSISGLLLSVALLPSVVSAQDHVYLDPSSSGSPYLGPQIPLTGLPALTGTHEFTLRHIYQRGTHDQPDLHRRLDIKPHTRLWAVSDDGLEKELVTFDTPLVASSSPLTIQRLADRRLSVIEGYLAAARSRGEAVALSPSEWVMDTLAGPNVTDKESVLTFAKMTANDYIEEPGSGDWHYIHGRFNYSSSFGWQSDGLRGHIYADKTNSTIVISLKGTSPALFDGAGTTTNDKINDNLFFSCCCGQGGSYLWRQVCDCQQSAFTANLTCIVEAMNDENRYYRAAIDLYSNVTDMYPDANVWLTGHSLGGAMSSLLGLTFGLPVVTFEAVPEALPAARLGLPSPPGHDPRLPQSRQYTGAYHFGHTADPVYMGTCNGVGSICTWGGYAMESACHTGQMCVYDTVEDKGWRVALSTHRIEAVISDVLEVYEDIPPCAPEEECYDCELWKFFKSNGSESTTTSTTTTTTAPTTTRTSTCKTPGWWGCLDESTTTTTTTSTTTTTTTTTTSTCKTPGWFGCKDPTTTTEATAAPSVTTSIPTPTTYPTSSTSTCKDPGWFGCRDPPSTTASITSSPSTTSTCDDPGFFWGCYDESTTATHPITSGPSAPYSTPSPTHEHTCTSSIFFGLICVGSTGTELR</sequence>
<keyword id="KW-0072">Autophagy</keyword>
<keyword id="KW-0967">Endosome</keyword>
<keyword id="KW-0325">Glycoprotein</keyword>
<keyword id="KW-0378">Hydrolase</keyword>
<keyword id="KW-0442">Lipid degradation</keyword>
<keyword id="KW-0443">Lipid metabolism</keyword>
<keyword id="KW-0472">Membrane</keyword>
<keyword id="KW-1185">Reference proteome</keyword>
<keyword id="KW-0735">Signal-anchor</keyword>
<keyword id="KW-0812">Transmembrane</keyword>
<keyword id="KW-1133">Transmembrane helix</keyword>
<proteinExistence type="inferred from homology"/>
<name>ATG15_ASPFU</name>
<accession>Q4X180</accession>
<evidence type="ECO:0000250" key="1"/>
<evidence type="ECO:0000250" key="2">
    <source>
        <dbReference type="UniProtKB" id="P25641"/>
    </source>
</evidence>
<evidence type="ECO:0000255" key="3"/>
<evidence type="ECO:0000255" key="4">
    <source>
        <dbReference type="PROSITE-ProRule" id="PRU10037"/>
    </source>
</evidence>
<evidence type="ECO:0000305" key="5"/>
<organism>
    <name type="scientific">Aspergillus fumigatus (strain ATCC MYA-4609 / CBS 101355 / FGSC A1100 / Af293)</name>
    <name type="common">Neosartorya fumigata</name>
    <dbReference type="NCBI Taxonomy" id="330879"/>
    <lineage>
        <taxon>Eukaryota</taxon>
        <taxon>Fungi</taxon>
        <taxon>Dikarya</taxon>
        <taxon>Ascomycota</taxon>
        <taxon>Pezizomycotina</taxon>
        <taxon>Eurotiomycetes</taxon>
        <taxon>Eurotiomycetidae</taxon>
        <taxon>Eurotiales</taxon>
        <taxon>Aspergillaceae</taxon>
        <taxon>Aspergillus</taxon>
        <taxon>Aspergillus subgen. Fumigati</taxon>
    </lineage>
</organism>